<feature type="chain" id="PRO_0000300155" description="Replication factor C large subunit">
    <location>
        <begin position="1"/>
        <end position="422"/>
    </location>
</feature>
<feature type="binding site" evidence="1">
    <location>
        <begin position="63"/>
        <end position="70"/>
    </location>
    <ligand>
        <name>ATP</name>
        <dbReference type="ChEBI" id="CHEBI:30616"/>
    </ligand>
</feature>
<protein>
    <recommendedName>
        <fullName evidence="1">Replication factor C large subunit</fullName>
        <shortName evidence="1">RFC large subunit</shortName>
    </recommendedName>
    <alternativeName>
        <fullName evidence="1">Clamp loader large subunit</fullName>
    </alternativeName>
</protein>
<accession>A4WGV3</accession>
<sequence length="422" mass="47996">MALPWVEKYRPKSFADVVDQEEAKYVLASWICARFRAPKDFCTRWAKKKDKEILDARAVLLAGPPGVGKTTLIHALAREIGYELIELNASDVRTAERLKEVVGRGLREGSLFGYGGKIVLFDEVDGLHVKEDAGGLEAIIEIIENSKVPIVMTANNPYDPRFRPLRDISLVVNLKRLSEEEVVEVLRRICTSEGAKCEEEALRSIAKSSLGDLRAAINDLQMYLSGGRKTLTVDDIKRVGERNPQLSMFEILDRVYRARWFDEARAISFNPSFDWEQYFIWATETIPVVYKEIETMSVAYDRLSKADMFIGRIKRTQEWELLPYALELALGGVSQIKSKPRLPPFIKYGFPQRLLILAKSREARKRRDVLVEYLAQNLHVSRSYVKSEIIYVLGVLAKSDSKIVERLSKALGINAIDIKTLL</sequence>
<dbReference type="EMBL" id="CP000660">
    <property type="protein sequence ID" value="ABP49620.1"/>
    <property type="molecule type" value="Genomic_DNA"/>
</dbReference>
<dbReference type="RefSeq" id="WP_011899528.1">
    <property type="nucleotide sequence ID" value="NC_009376.1"/>
</dbReference>
<dbReference type="SMR" id="A4WGV3"/>
<dbReference type="STRING" id="340102.Pars_0003"/>
<dbReference type="GeneID" id="5054940"/>
<dbReference type="KEGG" id="pas:Pars_0003"/>
<dbReference type="HOGENOM" id="CLU_027255_1_1_2"/>
<dbReference type="OrthoDB" id="8658at2157"/>
<dbReference type="PhylomeDB" id="A4WGV3"/>
<dbReference type="Proteomes" id="UP000001567">
    <property type="component" value="Chromosome"/>
</dbReference>
<dbReference type="GO" id="GO:0005524">
    <property type="term" value="F:ATP binding"/>
    <property type="evidence" value="ECO:0007669"/>
    <property type="project" value="UniProtKB-UniRule"/>
</dbReference>
<dbReference type="GO" id="GO:0016887">
    <property type="term" value="F:ATP hydrolysis activity"/>
    <property type="evidence" value="ECO:0007669"/>
    <property type="project" value="InterPro"/>
</dbReference>
<dbReference type="GO" id="GO:0003689">
    <property type="term" value="F:DNA clamp loader activity"/>
    <property type="evidence" value="ECO:0007669"/>
    <property type="project" value="UniProtKB-UniRule"/>
</dbReference>
<dbReference type="GO" id="GO:0006260">
    <property type="term" value="P:DNA replication"/>
    <property type="evidence" value="ECO:0007669"/>
    <property type="project" value="UniProtKB-UniRule"/>
</dbReference>
<dbReference type="CDD" id="cd00009">
    <property type="entry name" value="AAA"/>
    <property type="match status" value="1"/>
</dbReference>
<dbReference type="CDD" id="cd18140">
    <property type="entry name" value="HLD_clamp_RFC"/>
    <property type="match status" value="1"/>
</dbReference>
<dbReference type="Gene3D" id="1.10.8.60">
    <property type="match status" value="1"/>
</dbReference>
<dbReference type="Gene3D" id="3.40.50.300">
    <property type="entry name" value="P-loop containing nucleotide triphosphate hydrolases"/>
    <property type="match status" value="1"/>
</dbReference>
<dbReference type="HAMAP" id="MF_01508">
    <property type="entry name" value="RfcL"/>
    <property type="match status" value="1"/>
</dbReference>
<dbReference type="InterPro" id="IPR003593">
    <property type="entry name" value="AAA+_ATPase"/>
</dbReference>
<dbReference type="InterPro" id="IPR003959">
    <property type="entry name" value="ATPase_AAA_core"/>
</dbReference>
<dbReference type="InterPro" id="IPR027417">
    <property type="entry name" value="P-loop_NTPase"/>
</dbReference>
<dbReference type="InterPro" id="IPR023935">
    <property type="entry name" value="Rep_factor-C_lsu"/>
</dbReference>
<dbReference type="InterPro" id="IPR047854">
    <property type="entry name" value="RFC_lid"/>
</dbReference>
<dbReference type="NCBIfam" id="NF003229">
    <property type="entry name" value="PRK04195.1-5"/>
    <property type="match status" value="1"/>
</dbReference>
<dbReference type="PANTHER" id="PTHR23389">
    <property type="entry name" value="CHROMOSOME TRANSMISSION FIDELITY FACTOR 18"/>
    <property type="match status" value="1"/>
</dbReference>
<dbReference type="PANTHER" id="PTHR23389:SF6">
    <property type="entry name" value="REPLICATION FACTOR C SUBUNIT 1"/>
    <property type="match status" value="1"/>
</dbReference>
<dbReference type="Pfam" id="PF00004">
    <property type="entry name" value="AAA"/>
    <property type="match status" value="1"/>
</dbReference>
<dbReference type="Pfam" id="PF21960">
    <property type="entry name" value="RCF1-5-like_lid"/>
    <property type="match status" value="1"/>
</dbReference>
<dbReference type="SMART" id="SM00382">
    <property type="entry name" value="AAA"/>
    <property type="match status" value="1"/>
</dbReference>
<dbReference type="SUPFAM" id="SSF52540">
    <property type="entry name" value="P-loop containing nucleoside triphosphate hydrolases"/>
    <property type="match status" value="1"/>
</dbReference>
<keyword id="KW-0067">ATP-binding</keyword>
<keyword id="KW-0235">DNA replication</keyword>
<keyword id="KW-0547">Nucleotide-binding</keyword>
<evidence type="ECO:0000255" key="1">
    <source>
        <dbReference type="HAMAP-Rule" id="MF_01508"/>
    </source>
</evidence>
<proteinExistence type="inferred from homology"/>
<organism>
    <name type="scientific">Pyrobaculum arsenaticum (strain DSM 13514 / JCM 11321 / PZ6)</name>
    <dbReference type="NCBI Taxonomy" id="340102"/>
    <lineage>
        <taxon>Archaea</taxon>
        <taxon>Thermoproteota</taxon>
        <taxon>Thermoprotei</taxon>
        <taxon>Thermoproteales</taxon>
        <taxon>Thermoproteaceae</taxon>
        <taxon>Pyrobaculum</taxon>
    </lineage>
</organism>
<name>RFCL_PYRAR</name>
<reference key="1">
    <citation type="submission" date="2007-04" db="EMBL/GenBank/DDBJ databases">
        <title>Complete sequence of Pyrobaculum arsenaticum DSM 13514.</title>
        <authorList>
            <consortium name="US DOE Joint Genome Institute"/>
            <person name="Copeland A."/>
            <person name="Lucas S."/>
            <person name="Lapidus A."/>
            <person name="Barry K."/>
            <person name="Glavina del Rio T."/>
            <person name="Dalin E."/>
            <person name="Tice H."/>
            <person name="Pitluck S."/>
            <person name="Chain P."/>
            <person name="Malfatti S."/>
            <person name="Shin M."/>
            <person name="Vergez L."/>
            <person name="Schmutz J."/>
            <person name="Larimer F."/>
            <person name="Land M."/>
            <person name="Hauser L."/>
            <person name="Kyrpides N."/>
            <person name="Mikhailova N."/>
            <person name="Cozen A.E."/>
            <person name="Fitz-Gibbon S.T."/>
            <person name="House C.H."/>
            <person name="Saltikov C."/>
            <person name="Lowe T.M."/>
            <person name="Richardson P."/>
        </authorList>
    </citation>
    <scope>NUCLEOTIDE SEQUENCE [LARGE SCALE GENOMIC DNA]</scope>
    <source>
        <strain>ATCC 700994 / DSM 13514 / JCM 11321 / PZ6</strain>
    </source>
</reference>
<gene>
    <name evidence="1" type="primary">rfcL</name>
    <name type="ordered locus">Pars_0003</name>
</gene>
<comment type="function">
    <text evidence="1">Part of the RFC clamp loader complex which loads the PCNA sliding clamp onto DNA.</text>
</comment>
<comment type="subunit">
    <text evidence="1">Heteromultimer composed of small subunits (RfcS) and large subunits (RfcL).</text>
</comment>
<comment type="similarity">
    <text evidence="1">Belongs to the activator 1 small subunits family. RfcL subfamily.</text>
</comment>